<dbReference type="EMBL" id="AB024033">
    <property type="protein sequence ID" value="BAB02428.1"/>
    <property type="molecule type" value="Genomic_DNA"/>
</dbReference>
<dbReference type="EMBL" id="CP002686">
    <property type="protein sequence ID" value="AEE75252.2"/>
    <property type="molecule type" value="Genomic_DNA"/>
</dbReference>
<dbReference type="RefSeq" id="NP_001319533.1">
    <property type="nucleotide sequence ID" value="NM_001338011.1"/>
</dbReference>
<dbReference type="DNASU" id="820466"/>
<dbReference type="EnsemblPlants" id="AT3G12840.1">
    <property type="protein sequence ID" value="AT3G12840.1"/>
    <property type="gene ID" value="AT3G12840"/>
</dbReference>
<dbReference type="GeneID" id="28719266"/>
<dbReference type="Gramene" id="AT3G12840.1">
    <property type="protein sequence ID" value="AT3G12840.1"/>
    <property type="gene ID" value="AT3G12840"/>
</dbReference>
<dbReference type="KEGG" id="ath:AT3G12840"/>
<dbReference type="Araport" id="AT3G12840"/>
<dbReference type="TAIR" id="AT3G12840"/>
<dbReference type="InParanoid" id="Q9LTV2"/>
<dbReference type="OrthoDB" id="1095281at2759"/>
<dbReference type="PhylomeDB" id="Q9LTV2"/>
<dbReference type="PRO" id="PR:Q9LTV2"/>
<dbReference type="Proteomes" id="UP000006548">
    <property type="component" value="Chromosome 3"/>
</dbReference>
<dbReference type="ExpressionAtlas" id="Q9LTV2">
    <property type="expression patterns" value="baseline and differential"/>
</dbReference>
<dbReference type="CDD" id="cd22160">
    <property type="entry name" value="F-box_AtFBL13-like"/>
    <property type="match status" value="1"/>
</dbReference>
<dbReference type="Gene3D" id="1.20.1280.50">
    <property type="match status" value="1"/>
</dbReference>
<dbReference type="InterPro" id="IPR036047">
    <property type="entry name" value="F-box-like_dom_sf"/>
</dbReference>
<dbReference type="InterPro" id="IPR053781">
    <property type="entry name" value="F-box_AtFBL13-like"/>
</dbReference>
<dbReference type="InterPro" id="IPR001810">
    <property type="entry name" value="F-box_dom"/>
</dbReference>
<dbReference type="InterPro" id="IPR006566">
    <property type="entry name" value="FBD"/>
</dbReference>
<dbReference type="InterPro" id="IPR050232">
    <property type="entry name" value="FBL13/AtMIF1-like"/>
</dbReference>
<dbReference type="PANTHER" id="PTHR31900">
    <property type="entry name" value="F-BOX/RNI SUPERFAMILY PROTEIN-RELATED"/>
    <property type="match status" value="1"/>
</dbReference>
<dbReference type="PANTHER" id="PTHR31900:SF30">
    <property type="entry name" value="SUPERFAMILY PROTEIN, PUTATIVE-RELATED"/>
    <property type="match status" value="1"/>
</dbReference>
<dbReference type="Pfam" id="PF00646">
    <property type="entry name" value="F-box"/>
    <property type="match status" value="1"/>
</dbReference>
<dbReference type="Pfam" id="PF08387">
    <property type="entry name" value="FBD"/>
    <property type="match status" value="1"/>
</dbReference>
<dbReference type="SMART" id="SM00579">
    <property type="entry name" value="FBD"/>
    <property type="match status" value="1"/>
</dbReference>
<dbReference type="SMART" id="SM00256">
    <property type="entry name" value="FBOX"/>
    <property type="match status" value="1"/>
</dbReference>
<dbReference type="SUPFAM" id="SSF81383">
    <property type="entry name" value="F-box domain"/>
    <property type="match status" value="1"/>
</dbReference>
<dbReference type="PROSITE" id="PS50181">
    <property type="entry name" value="FBOX"/>
    <property type="match status" value="1"/>
</dbReference>
<gene>
    <name type="ordered locus">At3g12840</name>
    <name type="ORF">MBK21.22</name>
</gene>
<sequence length="179" mass="20664">MYPKAKATRVCSDAARINDLPDDLLATVLSFVPTKDAVATSILSKRWRPIWKRAVNLESDCVELCAICALDCFSFILMRSSKLRVLRFKQKRCCCNLLREKWKQPDFVPLSLYRSLEAFEWIGFKGREKTEKKAAFHILRNACNLKTMAITTSNTFQENTNILIDFDRMCTNCRISIKP</sequence>
<proteinExistence type="predicted"/>
<protein>
    <recommendedName>
        <fullName>Putative FBD-associated F-box protein At3g12840</fullName>
    </recommendedName>
</protein>
<accession>Q9LTV2</accession>
<accession>Q3EB76</accession>
<feature type="chain" id="PRO_0000283141" description="Putative FBD-associated F-box protein At3g12840">
    <location>
        <begin position="1"/>
        <end position="179"/>
    </location>
</feature>
<feature type="domain" description="F-box" evidence="1">
    <location>
        <begin position="14"/>
        <end position="60"/>
    </location>
</feature>
<feature type="domain" description="FBD">
    <location>
        <begin position="101"/>
        <end position="152"/>
    </location>
</feature>
<organism>
    <name type="scientific">Arabidopsis thaliana</name>
    <name type="common">Mouse-ear cress</name>
    <dbReference type="NCBI Taxonomy" id="3702"/>
    <lineage>
        <taxon>Eukaryota</taxon>
        <taxon>Viridiplantae</taxon>
        <taxon>Streptophyta</taxon>
        <taxon>Embryophyta</taxon>
        <taxon>Tracheophyta</taxon>
        <taxon>Spermatophyta</taxon>
        <taxon>Magnoliopsida</taxon>
        <taxon>eudicotyledons</taxon>
        <taxon>Gunneridae</taxon>
        <taxon>Pentapetalae</taxon>
        <taxon>rosids</taxon>
        <taxon>malvids</taxon>
        <taxon>Brassicales</taxon>
        <taxon>Brassicaceae</taxon>
        <taxon>Camelineae</taxon>
        <taxon>Arabidopsis</taxon>
    </lineage>
</organism>
<reference key="1">
    <citation type="journal article" date="2000" name="DNA Res.">
        <title>Structural analysis of Arabidopsis thaliana chromosome 3. I. Sequence features of the regions of 4,504,864 bp covered by sixty P1 and TAC clones.</title>
        <authorList>
            <person name="Sato S."/>
            <person name="Nakamura Y."/>
            <person name="Kaneko T."/>
            <person name="Katoh T."/>
            <person name="Asamizu E."/>
            <person name="Tabata S."/>
        </authorList>
    </citation>
    <scope>NUCLEOTIDE SEQUENCE [LARGE SCALE GENOMIC DNA]</scope>
    <source>
        <strain>cv. Columbia</strain>
    </source>
</reference>
<reference key="2">
    <citation type="journal article" date="2017" name="Plant J.">
        <title>Araport11: a complete reannotation of the Arabidopsis thaliana reference genome.</title>
        <authorList>
            <person name="Cheng C.Y."/>
            <person name="Krishnakumar V."/>
            <person name="Chan A.P."/>
            <person name="Thibaud-Nissen F."/>
            <person name="Schobel S."/>
            <person name="Town C.D."/>
        </authorList>
    </citation>
    <scope>GENOME REANNOTATION</scope>
    <source>
        <strain>cv. Columbia</strain>
    </source>
</reference>
<evidence type="ECO:0000255" key="1">
    <source>
        <dbReference type="PROSITE-ProRule" id="PRU00080"/>
    </source>
</evidence>
<keyword id="KW-1185">Reference proteome</keyword>
<name>FBD8_ARATH</name>